<protein>
    <recommendedName>
        <fullName evidence="2">Molybdopterin synthase catalytic subunit</fullName>
        <ecNumber evidence="2">2.8.1.12</ecNumber>
    </recommendedName>
    <alternativeName>
        <fullName evidence="2">Molybdenum cofactor synthesis protein 2 large subunit</fullName>
    </alternativeName>
    <alternativeName>
        <fullName evidence="2">Molybdenum cofactor synthesis protein 2B</fullName>
        <shortName evidence="2">MOCS2B</shortName>
    </alternativeName>
</protein>
<feature type="chain" id="PRO_0000369326" description="Molybdopterin synthase catalytic subunit">
    <location>
        <begin position="1"/>
        <end position="172"/>
    </location>
</feature>
<feature type="binding site" evidence="2">
    <location>
        <begin position="127"/>
        <end position="128"/>
    </location>
    <ligand>
        <name>substrate</name>
    </ligand>
</feature>
<feature type="binding site" evidence="2">
    <location>
        <position position="143"/>
    </location>
    <ligand>
        <name>substrate</name>
    </ligand>
</feature>
<feature type="binding site" evidence="2">
    <location>
        <begin position="150"/>
        <end position="152"/>
    </location>
    <ligand>
        <name>substrate</name>
    </ligand>
</feature>
<feature type="modified residue" description="Phosphoserine" evidence="1">
    <location>
        <position position="20"/>
    </location>
</feature>
<dbReference type="EC" id="2.8.1.12" evidence="2"/>
<dbReference type="EMBL" id="CR859160">
    <property type="protein sequence ID" value="CAH91349.1"/>
    <property type="status" value="ALT_FRAME"/>
    <property type="molecule type" value="mRNA"/>
</dbReference>
<dbReference type="SMR" id="Q5RA61"/>
<dbReference type="STRING" id="9601.ENSPPYP00000017268"/>
<dbReference type="eggNOG" id="KOG3307">
    <property type="taxonomic scope" value="Eukaryota"/>
</dbReference>
<dbReference type="InParanoid" id="Q5RA61"/>
<dbReference type="UniPathway" id="UPA00344"/>
<dbReference type="Proteomes" id="UP000001595">
    <property type="component" value="Unplaced"/>
</dbReference>
<dbReference type="GO" id="GO:0005829">
    <property type="term" value="C:cytosol"/>
    <property type="evidence" value="ECO:0000250"/>
    <property type="project" value="UniProtKB"/>
</dbReference>
<dbReference type="GO" id="GO:1990140">
    <property type="term" value="C:molybdopterin synthase complex"/>
    <property type="evidence" value="ECO:0000250"/>
    <property type="project" value="UniProtKB"/>
</dbReference>
<dbReference type="GO" id="GO:0030366">
    <property type="term" value="F:molybdopterin synthase activity"/>
    <property type="evidence" value="ECO:0007669"/>
    <property type="project" value="UniProtKB-UniRule"/>
</dbReference>
<dbReference type="GO" id="GO:0006777">
    <property type="term" value="P:Mo-molybdopterin cofactor biosynthetic process"/>
    <property type="evidence" value="ECO:0000250"/>
    <property type="project" value="UniProtKB"/>
</dbReference>
<dbReference type="CDD" id="cd00756">
    <property type="entry name" value="MoaE"/>
    <property type="match status" value="1"/>
</dbReference>
<dbReference type="FunFam" id="3.90.1170.40:FF:000002">
    <property type="entry name" value="Molybdopterin synthase catalytic subunit"/>
    <property type="match status" value="1"/>
</dbReference>
<dbReference type="Gene3D" id="3.90.1170.40">
    <property type="entry name" value="Molybdopterin biosynthesis MoaE subunit"/>
    <property type="match status" value="1"/>
</dbReference>
<dbReference type="HAMAP" id="MF_03052">
    <property type="entry name" value="MOC2B"/>
    <property type="match status" value="1"/>
</dbReference>
<dbReference type="InterPro" id="IPR036563">
    <property type="entry name" value="MoaE_sf"/>
</dbReference>
<dbReference type="InterPro" id="IPR028888">
    <property type="entry name" value="MOCS2B_euk"/>
</dbReference>
<dbReference type="InterPro" id="IPR003448">
    <property type="entry name" value="Mopterin_biosynth_MoaE"/>
</dbReference>
<dbReference type="PANTHER" id="PTHR23404">
    <property type="entry name" value="MOLYBDOPTERIN SYNTHASE RELATED"/>
    <property type="match status" value="1"/>
</dbReference>
<dbReference type="Pfam" id="PF02391">
    <property type="entry name" value="MoaE"/>
    <property type="match status" value="1"/>
</dbReference>
<dbReference type="SUPFAM" id="SSF54690">
    <property type="entry name" value="Molybdopterin synthase subunit MoaE"/>
    <property type="match status" value="1"/>
</dbReference>
<evidence type="ECO:0000250" key="1">
    <source>
        <dbReference type="UniProtKB" id="O96007"/>
    </source>
</evidence>
<evidence type="ECO:0000255" key="2">
    <source>
        <dbReference type="HAMAP-Rule" id="MF_03052"/>
    </source>
</evidence>
<evidence type="ECO:0000305" key="3"/>
<proteinExistence type="evidence at transcript level"/>
<gene>
    <name evidence="2" type="primary">MOCS2</name>
</gene>
<accession>Q5RA61</accession>
<sequence>MSSLEISSSCFNLETKLPLSPPLVEDSAFEPSRKDMDEVEEKSKDVINFTAEKLSVDEVSQLVISPLCGAISLFVGTTRNNFEGKKVISLEYEAYLPMAENEVRKICSDIRQKWPVKHIAVFHRLGHRAASLEAVSYAIDTLKAKVPIWKKEIYEESSSWKGNKECFWASNN</sequence>
<reference key="1">
    <citation type="submission" date="2004-11" db="EMBL/GenBank/DDBJ databases">
        <authorList>
            <consortium name="The German cDNA consortium"/>
        </authorList>
    </citation>
    <scope>NUCLEOTIDE SEQUENCE [LARGE SCALE MRNA]</scope>
    <source>
        <tissue>Heart</tissue>
    </source>
</reference>
<name>MOC2B_PONAB</name>
<comment type="function">
    <text evidence="2">Catalytic subunit of the molybdopterin synthase complex, a complex that catalyzes the conversion of precursor Z into molybdopterin. Acts by mediating the incorporation of 2 sulfur atoms from thiocarboxylated MOCS2A into precursor Z to generate a dithiolene group.</text>
</comment>
<comment type="catalytic activity">
    <reaction evidence="2">
        <text>2 [molybdopterin-synthase sulfur-carrier protein]-C-terminal-Gly-aminoethanethioate + cyclic pyranopterin phosphate + H2O = molybdopterin + 2 [molybdopterin-synthase sulfur-carrier protein]-C-terminal Gly-Gly + 2 H(+)</text>
        <dbReference type="Rhea" id="RHEA:26333"/>
        <dbReference type="Rhea" id="RHEA-COMP:12202"/>
        <dbReference type="Rhea" id="RHEA-COMP:19907"/>
        <dbReference type="ChEBI" id="CHEBI:15377"/>
        <dbReference type="ChEBI" id="CHEBI:15378"/>
        <dbReference type="ChEBI" id="CHEBI:58698"/>
        <dbReference type="ChEBI" id="CHEBI:59648"/>
        <dbReference type="ChEBI" id="CHEBI:90778"/>
        <dbReference type="ChEBI" id="CHEBI:232372"/>
        <dbReference type="EC" id="2.8.1.12"/>
    </reaction>
</comment>
<comment type="pathway">
    <text evidence="2">Cofactor biosynthesis; molybdopterin biosynthesis.</text>
</comment>
<comment type="subunit">
    <text evidence="2">Heterotetramer; composed of 2 small (MOCS2A) and 2 large (MOCS2B) subunits.</text>
</comment>
<comment type="subcellular location">
    <subcellularLocation>
        <location evidence="2">Cytoplasm</location>
        <location evidence="2">Cytosol</location>
    </subcellularLocation>
</comment>
<comment type="miscellaneous">
    <text>This protein is produced by a bicistronic gene which also produces the small subunit (MOCS2A) from an overlapping reading frame.</text>
</comment>
<comment type="similarity">
    <text evidence="2">Belongs to the MoaE family. MOCS2B subfamily.</text>
</comment>
<comment type="sequence caution" evidence="3">
    <conflict type="frameshift">
        <sequence resource="EMBL-CDS" id="CAH91349"/>
    </conflict>
</comment>
<organism>
    <name type="scientific">Pongo abelii</name>
    <name type="common">Sumatran orangutan</name>
    <name type="synonym">Pongo pygmaeus abelii</name>
    <dbReference type="NCBI Taxonomy" id="9601"/>
    <lineage>
        <taxon>Eukaryota</taxon>
        <taxon>Metazoa</taxon>
        <taxon>Chordata</taxon>
        <taxon>Craniata</taxon>
        <taxon>Vertebrata</taxon>
        <taxon>Euteleostomi</taxon>
        <taxon>Mammalia</taxon>
        <taxon>Eutheria</taxon>
        <taxon>Euarchontoglires</taxon>
        <taxon>Primates</taxon>
        <taxon>Haplorrhini</taxon>
        <taxon>Catarrhini</taxon>
        <taxon>Hominidae</taxon>
        <taxon>Pongo</taxon>
    </lineage>
</organism>
<keyword id="KW-0963">Cytoplasm</keyword>
<keyword id="KW-0501">Molybdenum cofactor biosynthesis</keyword>
<keyword id="KW-0597">Phosphoprotein</keyword>
<keyword id="KW-1185">Reference proteome</keyword>
<keyword id="KW-0808">Transferase</keyword>